<comment type="function">
    <text evidence="1">Catalyzes the ATP-dependent condensation of GlcN-Ins and L-cysteine to form L-Cys-GlcN-Ins.</text>
</comment>
<comment type="catalytic activity">
    <reaction evidence="1">
        <text>1D-myo-inositol 2-amino-2-deoxy-alpha-D-glucopyranoside + L-cysteine + ATP = 1D-myo-inositol 2-(L-cysteinylamino)-2-deoxy-alpha-D-glucopyranoside + AMP + diphosphate + H(+)</text>
        <dbReference type="Rhea" id="RHEA:26176"/>
        <dbReference type="ChEBI" id="CHEBI:15378"/>
        <dbReference type="ChEBI" id="CHEBI:30616"/>
        <dbReference type="ChEBI" id="CHEBI:33019"/>
        <dbReference type="ChEBI" id="CHEBI:35235"/>
        <dbReference type="ChEBI" id="CHEBI:58886"/>
        <dbReference type="ChEBI" id="CHEBI:58887"/>
        <dbReference type="ChEBI" id="CHEBI:456215"/>
        <dbReference type="EC" id="6.3.1.13"/>
    </reaction>
</comment>
<comment type="cofactor">
    <cofactor evidence="1">
        <name>Zn(2+)</name>
        <dbReference type="ChEBI" id="CHEBI:29105"/>
    </cofactor>
    <text evidence="1">Binds 1 zinc ion per subunit.</text>
</comment>
<comment type="subunit">
    <text evidence="1">Monomer.</text>
</comment>
<comment type="similarity">
    <text evidence="1">Belongs to the class-I aminoacyl-tRNA synthetase family. MshC subfamily.</text>
</comment>
<gene>
    <name evidence="1" type="primary">mshC</name>
    <name type="ordered locus">JTY_2141</name>
</gene>
<dbReference type="EC" id="6.3.1.13" evidence="1"/>
<dbReference type="EMBL" id="AP010918">
    <property type="protein sequence ID" value="BAH26425.1"/>
    <property type="molecule type" value="Genomic_DNA"/>
</dbReference>
<dbReference type="RefSeq" id="WP_003411091.1">
    <property type="nucleotide sequence ID" value="NZ_CP014566.1"/>
</dbReference>
<dbReference type="SMR" id="C1AQ46"/>
<dbReference type="KEGG" id="mbt:JTY_2141"/>
<dbReference type="HOGENOM" id="CLU_013528_0_0_11"/>
<dbReference type="GO" id="GO:0005829">
    <property type="term" value="C:cytosol"/>
    <property type="evidence" value="ECO:0007669"/>
    <property type="project" value="TreeGrafter"/>
</dbReference>
<dbReference type="GO" id="GO:0005524">
    <property type="term" value="F:ATP binding"/>
    <property type="evidence" value="ECO:0007669"/>
    <property type="project" value="UniProtKB-KW"/>
</dbReference>
<dbReference type="GO" id="GO:0035446">
    <property type="term" value="F:cysteine-glucosaminylinositol ligase activity"/>
    <property type="evidence" value="ECO:0007669"/>
    <property type="project" value="UniProtKB-UniRule"/>
</dbReference>
<dbReference type="GO" id="GO:0004817">
    <property type="term" value="F:cysteine-tRNA ligase activity"/>
    <property type="evidence" value="ECO:0007669"/>
    <property type="project" value="TreeGrafter"/>
</dbReference>
<dbReference type="GO" id="GO:0008270">
    <property type="term" value="F:zinc ion binding"/>
    <property type="evidence" value="ECO:0007669"/>
    <property type="project" value="UniProtKB-UniRule"/>
</dbReference>
<dbReference type="GO" id="GO:0006423">
    <property type="term" value="P:cysteinyl-tRNA aminoacylation"/>
    <property type="evidence" value="ECO:0007669"/>
    <property type="project" value="TreeGrafter"/>
</dbReference>
<dbReference type="GO" id="GO:0010125">
    <property type="term" value="P:mycothiol biosynthetic process"/>
    <property type="evidence" value="ECO:0007669"/>
    <property type="project" value="UniProtKB-UniRule"/>
</dbReference>
<dbReference type="CDD" id="cd07955">
    <property type="entry name" value="Anticodon_Ia_Cys_like"/>
    <property type="match status" value="1"/>
</dbReference>
<dbReference type="CDD" id="cd00672">
    <property type="entry name" value="CysRS_core"/>
    <property type="match status" value="1"/>
</dbReference>
<dbReference type="FunFam" id="1.20.120.640:FF:000001">
    <property type="entry name" value="L-cysteine:1D-myo-inositol 2-amino-2-deoxy-alpha-D-glucopyranoside ligase"/>
    <property type="match status" value="1"/>
</dbReference>
<dbReference type="FunFam" id="3.40.50.620:FF:000134">
    <property type="entry name" value="L-cysteine:1D-myo-inositol 2-amino-2-deoxy-alpha-D-glucopyranoside ligase"/>
    <property type="match status" value="1"/>
</dbReference>
<dbReference type="Gene3D" id="1.20.120.640">
    <property type="entry name" value="Anticodon-binding domain of a subclass of class I aminoacyl-tRNA synthetases"/>
    <property type="match status" value="1"/>
</dbReference>
<dbReference type="Gene3D" id="3.40.50.620">
    <property type="entry name" value="HUPs"/>
    <property type="match status" value="1"/>
</dbReference>
<dbReference type="HAMAP" id="MF_01697">
    <property type="entry name" value="MshC"/>
    <property type="match status" value="1"/>
</dbReference>
<dbReference type="InterPro" id="IPR024909">
    <property type="entry name" value="Cys-tRNA/MSH_ligase"/>
</dbReference>
<dbReference type="InterPro" id="IPR017812">
    <property type="entry name" value="Mycothiol_ligase_MshC"/>
</dbReference>
<dbReference type="InterPro" id="IPR014729">
    <property type="entry name" value="Rossmann-like_a/b/a_fold"/>
</dbReference>
<dbReference type="InterPro" id="IPR032678">
    <property type="entry name" value="tRNA-synt_1_cat_dom"/>
</dbReference>
<dbReference type="NCBIfam" id="TIGR03447">
    <property type="entry name" value="mycothiol_MshC"/>
    <property type="match status" value="1"/>
</dbReference>
<dbReference type="PANTHER" id="PTHR10890:SF3">
    <property type="entry name" value="CYSTEINE--TRNA LIGASE, CYTOPLASMIC"/>
    <property type="match status" value="1"/>
</dbReference>
<dbReference type="PANTHER" id="PTHR10890">
    <property type="entry name" value="CYSTEINYL-TRNA SYNTHETASE"/>
    <property type="match status" value="1"/>
</dbReference>
<dbReference type="Pfam" id="PF01406">
    <property type="entry name" value="tRNA-synt_1e"/>
    <property type="match status" value="1"/>
</dbReference>
<dbReference type="PRINTS" id="PR00983">
    <property type="entry name" value="TRNASYNTHCYS"/>
</dbReference>
<dbReference type="SUPFAM" id="SSF52374">
    <property type="entry name" value="Nucleotidylyl transferase"/>
    <property type="match status" value="1"/>
</dbReference>
<keyword id="KW-0067">ATP-binding</keyword>
<keyword id="KW-0436">Ligase</keyword>
<keyword id="KW-0479">Metal-binding</keyword>
<keyword id="KW-0547">Nucleotide-binding</keyword>
<keyword id="KW-0862">Zinc</keyword>
<protein>
    <recommendedName>
        <fullName evidence="1">L-cysteine:1D-myo-inositol 2-amino-2-deoxy-alpha-D-glucopyranoside ligase</fullName>
        <shortName evidence="1">L-Cys:GlcN-Ins ligase</shortName>
        <ecNumber evidence="1">6.3.1.13</ecNumber>
    </recommendedName>
    <alternativeName>
        <fullName evidence="1">Mycothiol ligase</fullName>
        <shortName evidence="1">MSH ligase</shortName>
    </alternativeName>
</protein>
<organism>
    <name type="scientific">Mycobacterium bovis (strain BCG / Tokyo 172 / ATCC 35737 / TMC 1019)</name>
    <dbReference type="NCBI Taxonomy" id="561275"/>
    <lineage>
        <taxon>Bacteria</taxon>
        <taxon>Bacillati</taxon>
        <taxon>Actinomycetota</taxon>
        <taxon>Actinomycetes</taxon>
        <taxon>Mycobacteriales</taxon>
        <taxon>Mycobacteriaceae</taxon>
        <taxon>Mycobacterium</taxon>
        <taxon>Mycobacterium tuberculosis complex</taxon>
    </lineage>
</organism>
<proteinExistence type="inferred from homology"/>
<accession>C1AQ46</accession>
<sequence>MQSWYCPPVPVLPGRGPQLRLYDSADRQVRPVAPGSKATMYVCGITPYDATHLGHAATYVTFDLIHRLWLDLGHELHYVQNITDIDDPLFERADRDGVDWRDLAQAEVALFCEDMAALRVLPPQDYVGATEAIAEMVELIEKMLACGAAYVIDREMGEYQDIYFRADATLQFGYESGYDRDTMLRLCEERGGDPRRPGKSDELDALLWRAARPGEPSWPSPFGPGRPGWHVECAAIALSRIGSGLDIQGGGSDLIFPHHEFTAAHAECVSGERRFARHYVHAGMIGWDGHKMSKSRGNLVLVSALRAQDVEPSAVRLGLLAGHYRADRFWSQQVLDEATARLHRWRTATALPAGPAAVDVVARVRRYLADDLDTPKAIAALDGWVTDAVEYGGHDAGAPKLVATAIDALLGVDL</sequence>
<name>MSHC_MYCBT</name>
<feature type="chain" id="PRO_0000400459" description="L-cysteine:1D-myo-inositol 2-amino-2-deoxy-alpha-D-glucopyranoside ligase">
    <location>
        <begin position="1"/>
        <end position="414"/>
    </location>
</feature>
<feature type="short sequence motif" description="'HIGH' region" evidence="1">
    <location>
        <begin position="45"/>
        <end position="55"/>
    </location>
</feature>
<feature type="short sequence motif" description="'ERGGDP' region" evidence="1">
    <location>
        <begin position="189"/>
        <end position="194"/>
    </location>
</feature>
<feature type="short sequence motif" description="'KMSKS' region" evidence="1">
    <location>
        <begin position="291"/>
        <end position="295"/>
    </location>
</feature>
<feature type="binding site" evidence="1">
    <location>
        <begin position="43"/>
        <end position="46"/>
    </location>
    <ligand>
        <name>L-cysteinyl-5'-AMP</name>
        <dbReference type="ChEBI" id="CHEBI:144924"/>
    </ligand>
</feature>
<feature type="binding site" evidence="1">
    <location>
        <position position="43"/>
    </location>
    <ligand>
        <name>Zn(2+)</name>
        <dbReference type="ChEBI" id="CHEBI:29105"/>
    </ligand>
</feature>
<feature type="binding site" evidence="1">
    <location>
        <position position="58"/>
    </location>
    <ligand>
        <name>L-cysteinyl-5'-AMP</name>
        <dbReference type="ChEBI" id="CHEBI:144924"/>
    </ligand>
</feature>
<feature type="binding site" evidence="1">
    <location>
        <begin position="81"/>
        <end position="83"/>
    </location>
    <ligand>
        <name>L-cysteinyl-5'-AMP</name>
        <dbReference type="ChEBI" id="CHEBI:144924"/>
    </ligand>
</feature>
<feature type="binding site" evidence="1">
    <location>
        <position position="229"/>
    </location>
    <ligand>
        <name>L-cysteinyl-5'-AMP</name>
        <dbReference type="ChEBI" id="CHEBI:144924"/>
    </ligand>
</feature>
<feature type="binding site" evidence="1">
    <location>
        <position position="233"/>
    </location>
    <ligand>
        <name>Zn(2+)</name>
        <dbReference type="ChEBI" id="CHEBI:29105"/>
    </ligand>
</feature>
<feature type="binding site" evidence="1">
    <location>
        <begin position="251"/>
        <end position="253"/>
    </location>
    <ligand>
        <name>L-cysteinyl-5'-AMP</name>
        <dbReference type="ChEBI" id="CHEBI:144924"/>
    </ligand>
</feature>
<feature type="binding site" evidence="1">
    <location>
        <position position="258"/>
    </location>
    <ligand>
        <name>Zn(2+)</name>
        <dbReference type="ChEBI" id="CHEBI:29105"/>
    </ligand>
</feature>
<feature type="binding site" evidence="1">
    <location>
        <position position="285"/>
    </location>
    <ligand>
        <name>L-cysteinyl-5'-AMP</name>
        <dbReference type="ChEBI" id="CHEBI:144924"/>
    </ligand>
</feature>
<reference key="1">
    <citation type="journal article" date="2009" name="Vaccine">
        <title>Whole genome sequence analysis of Mycobacterium bovis bacillus Calmette-Guerin (BCG) Tokyo 172: a comparative study of BCG vaccine substrains.</title>
        <authorList>
            <person name="Seki M."/>
            <person name="Honda I."/>
            <person name="Fujita I."/>
            <person name="Yano I."/>
            <person name="Yamamoto S."/>
            <person name="Koyama A."/>
        </authorList>
    </citation>
    <scope>NUCLEOTIDE SEQUENCE [LARGE SCALE GENOMIC DNA]</scope>
    <source>
        <strain>BCG / Tokyo 172 / ATCC 35737 / TMC 1019</strain>
    </source>
</reference>
<evidence type="ECO:0000255" key="1">
    <source>
        <dbReference type="HAMAP-Rule" id="MF_01697"/>
    </source>
</evidence>